<name>DRL24_ARATH</name>
<evidence type="ECO:0000250" key="1"/>
<evidence type="ECO:0000255" key="2"/>
<evidence type="ECO:0000305" key="3"/>
<protein>
    <recommendedName>
        <fullName>Probable disease resistance protein At4g14610</fullName>
    </recommendedName>
    <alternativeName>
        <fullName>pCol1</fullName>
    </alternativeName>
</protein>
<accession>O23317</accession>
<accession>O64972</accession>
<accession>O82101</accession>
<comment type="function">
    <text evidence="1">Probable disease resistance protein.</text>
</comment>
<comment type="domain">
    <text evidence="1">The LRR repeats probably act as specificity determinant of pathogen recognition.</text>
</comment>
<comment type="similarity">
    <text evidence="3">Belongs to the disease resistance NB-LRR family.</text>
</comment>
<comment type="online information" name="NIB-LRRS">
    <link uri="http://niblrrs.ucdavis.edu"/>
    <text>Functional and comparative genomics of disease resistance gene homologs</text>
</comment>
<gene>
    <name type="ordered locus">At4g14610</name>
    <name type="ORF">dl3345c</name>
    <name type="ORF">FCAALL.272</name>
</gene>
<proteinExistence type="inferred from homology"/>
<organism>
    <name type="scientific">Arabidopsis thaliana</name>
    <name type="common">Mouse-ear cress</name>
    <dbReference type="NCBI Taxonomy" id="3702"/>
    <lineage>
        <taxon>Eukaryota</taxon>
        <taxon>Viridiplantae</taxon>
        <taxon>Streptophyta</taxon>
        <taxon>Embryophyta</taxon>
        <taxon>Tracheophyta</taxon>
        <taxon>Spermatophyta</taxon>
        <taxon>Magnoliopsida</taxon>
        <taxon>eudicotyledons</taxon>
        <taxon>Gunneridae</taxon>
        <taxon>Pentapetalae</taxon>
        <taxon>rosids</taxon>
        <taxon>malvids</taxon>
        <taxon>Brassicales</taxon>
        <taxon>Brassicaceae</taxon>
        <taxon>Camelineae</taxon>
        <taxon>Arabidopsis</taxon>
    </lineage>
</organism>
<reference key="1">
    <citation type="journal article" date="1998" name="Nature">
        <title>Analysis of 1.9 Mb of contiguous sequence from chromosome 4 of Arabidopsis thaliana.</title>
        <authorList>
            <person name="Bevan M."/>
            <person name="Bancroft I."/>
            <person name="Bent E."/>
            <person name="Love K."/>
            <person name="Goodman H.M."/>
            <person name="Dean C."/>
            <person name="Bergkamp R."/>
            <person name="Dirkse W."/>
            <person name="van Staveren M."/>
            <person name="Stiekema W."/>
            <person name="Drost L."/>
            <person name="Ridley P."/>
            <person name="Hudson S.-A."/>
            <person name="Patel K."/>
            <person name="Murphy G."/>
            <person name="Piffanelli P."/>
            <person name="Wedler H."/>
            <person name="Wedler E."/>
            <person name="Wambutt R."/>
            <person name="Weitzenegger T."/>
            <person name="Pohl T."/>
            <person name="Terryn N."/>
            <person name="Gielen J."/>
            <person name="Villarroel R."/>
            <person name="De Clercq R."/>
            <person name="van Montagu M."/>
            <person name="Lecharny A."/>
            <person name="Aubourg S."/>
            <person name="Gy I."/>
            <person name="Kreis M."/>
            <person name="Lao N."/>
            <person name="Kavanagh T."/>
            <person name="Hempel S."/>
            <person name="Kotter P."/>
            <person name="Entian K.-D."/>
            <person name="Rieger M."/>
            <person name="Schaefer M."/>
            <person name="Funk B."/>
            <person name="Mueller-Auer S."/>
            <person name="Silvey M."/>
            <person name="James R."/>
            <person name="Monfort A."/>
            <person name="Pons A."/>
            <person name="Puigdomenech P."/>
            <person name="Douka A."/>
            <person name="Voukelatou E."/>
            <person name="Milioni D."/>
            <person name="Hatzopoulos P."/>
            <person name="Piravandi E."/>
            <person name="Obermaier B."/>
            <person name="Hilbert H."/>
            <person name="Duesterhoeft A."/>
            <person name="Moores T."/>
            <person name="Jones J.D.G."/>
            <person name="Eneva T."/>
            <person name="Palme K."/>
            <person name="Benes V."/>
            <person name="Rechmann S."/>
            <person name="Ansorge W."/>
            <person name="Cooke R."/>
            <person name="Berger C."/>
            <person name="Delseny M."/>
            <person name="Voet M."/>
            <person name="Volckaert G."/>
            <person name="Mewes H.-W."/>
            <person name="Klosterman S."/>
            <person name="Schueller C."/>
            <person name="Chalwatzis N."/>
        </authorList>
    </citation>
    <scope>NUCLEOTIDE SEQUENCE [LARGE SCALE GENOMIC DNA]</scope>
    <source>
        <strain>cv. Columbia</strain>
    </source>
</reference>
<reference key="2">
    <citation type="journal article" date="1999" name="Nature">
        <title>Sequence and analysis of chromosome 4 of the plant Arabidopsis thaliana.</title>
        <authorList>
            <person name="Mayer K.F.X."/>
            <person name="Schueller C."/>
            <person name="Wambutt R."/>
            <person name="Murphy G."/>
            <person name="Volckaert G."/>
            <person name="Pohl T."/>
            <person name="Duesterhoeft A."/>
            <person name="Stiekema W."/>
            <person name="Entian K.-D."/>
            <person name="Terryn N."/>
            <person name="Harris B."/>
            <person name="Ansorge W."/>
            <person name="Brandt P."/>
            <person name="Grivell L.A."/>
            <person name="Rieger M."/>
            <person name="Weichselgartner M."/>
            <person name="de Simone V."/>
            <person name="Obermaier B."/>
            <person name="Mache R."/>
            <person name="Mueller M."/>
            <person name="Kreis M."/>
            <person name="Delseny M."/>
            <person name="Puigdomenech P."/>
            <person name="Watson M."/>
            <person name="Schmidtheini T."/>
            <person name="Reichert B."/>
            <person name="Portetelle D."/>
            <person name="Perez-Alonso M."/>
            <person name="Boutry M."/>
            <person name="Bancroft I."/>
            <person name="Vos P."/>
            <person name="Hoheisel J."/>
            <person name="Zimmermann W."/>
            <person name="Wedler H."/>
            <person name="Ridley P."/>
            <person name="Langham S.-A."/>
            <person name="McCullagh B."/>
            <person name="Bilham L."/>
            <person name="Robben J."/>
            <person name="van der Schueren J."/>
            <person name="Grymonprez B."/>
            <person name="Chuang Y.-J."/>
            <person name="Vandenbussche F."/>
            <person name="Braeken M."/>
            <person name="Weltjens I."/>
            <person name="Voet M."/>
            <person name="Bastiaens I."/>
            <person name="Aert R."/>
            <person name="Defoor E."/>
            <person name="Weitzenegger T."/>
            <person name="Bothe G."/>
            <person name="Ramsperger U."/>
            <person name="Hilbert H."/>
            <person name="Braun M."/>
            <person name="Holzer E."/>
            <person name="Brandt A."/>
            <person name="Peters S."/>
            <person name="van Staveren M."/>
            <person name="Dirkse W."/>
            <person name="Mooijman P."/>
            <person name="Klein Lankhorst R."/>
            <person name="Rose M."/>
            <person name="Hauf J."/>
            <person name="Koetter P."/>
            <person name="Berneiser S."/>
            <person name="Hempel S."/>
            <person name="Feldpausch M."/>
            <person name="Lamberth S."/>
            <person name="Van den Daele H."/>
            <person name="De Keyser A."/>
            <person name="Buysshaert C."/>
            <person name="Gielen J."/>
            <person name="Villarroel R."/>
            <person name="De Clercq R."/>
            <person name="van Montagu M."/>
            <person name="Rogers J."/>
            <person name="Cronin A."/>
            <person name="Quail M.A."/>
            <person name="Bray-Allen S."/>
            <person name="Clark L."/>
            <person name="Doggett J."/>
            <person name="Hall S."/>
            <person name="Kay M."/>
            <person name="Lennard N."/>
            <person name="McLay K."/>
            <person name="Mayes R."/>
            <person name="Pettett A."/>
            <person name="Rajandream M.A."/>
            <person name="Lyne M."/>
            <person name="Benes V."/>
            <person name="Rechmann S."/>
            <person name="Borkova D."/>
            <person name="Bloecker H."/>
            <person name="Scharfe M."/>
            <person name="Grimm M."/>
            <person name="Loehnert T.-H."/>
            <person name="Dose S."/>
            <person name="de Haan M."/>
            <person name="Maarse A.C."/>
            <person name="Schaefer M."/>
            <person name="Mueller-Auer S."/>
            <person name="Gabel C."/>
            <person name="Fuchs M."/>
            <person name="Fartmann B."/>
            <person name="Granderath K."/>
            <person name="Dauner D."/>
            <person name="Herzl A."/>
            <person name="Neumann S."/>
            <person name="Argiriou A."/>
            <person name="Vitale D."/>
            <person name="Liguori R."/>
            <person name="Piravandi E."/>
            <person name="Massenet O."/>
            <person name="Quigley F."/>
            <person name="Clabauld G."/>
            <person name="Muendlein A."/>
            <person name="Felber R."/>
            <person name="Schnabl S."/>
            <person name="Hiller R."/>
            <person name="Schmidt W."/>
            <person name="Lecharny A."/>
            <person name="Aubourg S."/>
            <person name="Chefdor F."/>
            <person name="Cooke R."/>
            <person name="Berger C."/>
            <person name="Monfort A."/>
            <person name="Casacuberta E."/>
            <person name="Gibbons T."/>
            <person name="Weber N."/>
            <person name="Vandenbol M."/>
            <person name="Bargues M."/>
            <person name="Terol J."/>
            <person name="Torres A."/>
            <person name="Perez-Perez A."/>
            <person name="Purnelle B."/>
            <person name="Bent E."/>
            <person name="Johnson S."/>
            <person name="Tacon D."/>
            <person name="Jesse T."/>
            <person name="Heijnen L."/>
            <person name="Schwarz S."/>
            <person name="Scholler P."/>
            <person name="Heber S."/>
            <person name="Francs P."/>
            <person name="Bielke C."/>
            <person name="Frishman D."/>
            <person name="Haase D."/>
            <person name="Lemcke K."/>
            <person name="Mewes H.-W."/>
            <person name="Stocker S."/>
            <person name="Zaccaria P."/>
            <person name="Bevan M."/>
            <person name="Wilson R.K."/>
            <person name="de la Bastide M."/>
            <person name="Habermann K."/>
            <person name="Parnell L."/>
            <person name="Dedhia N."/>
            <person name="Gnoj L."/>
            <person name="Schutz K."/>
            <person name="Huang E."/>
            <person name="Spiegel L."/>
            <person name="Sekhon M."/>
            <person name="Murray J."/>
            <person name="Sheet P."/>
            <person name="Cordes M."/>
            <person name="Abu-Threideh J."/>
            <person name="Stoneking T."/>
            <person name="Kalicki J."/>
            <person name="Graves T."/>
            <person name="Harmon G."/>
            <person name="Edwards J."/>
            <person name="Latreille P."/>
            <person name="Courtney L."/>
            <person name="Cloud J."/>
            <person name="Abbott A."/>
            <person name="Scott K."/>
            <person name="Johnson D."/>
            <person name="Minx P."/>
            <person name="Bentley D."/>
            <person name="Fulton B."/>
            <person name="Miller N."/>
            <person name="Greco T."/>
            <person name="Kemp K."/>
            <person name="Kramer J."/>
            <person name="Fulton L."/>
            <person name="Mardis E."/>
            <person name="Dante M."/>
            <person name="Pepin K."/>
            <person name="Hillier L.W."/>
            <person name="Nelson J."/>
            <person name="Spieth J."/>
            <person name="Ryan E."/>
            <person name="Andrews S."/>
            <person name="Geisel C."/>
            <person name="Layman D."/>
            <person name="Du H."/>
            <person name="Ali J."/>
            <person name="Berghoff A."/>
            <person name="Jones K."/>
            <person name="Drone K."/>
            <person name="Cotton M."/>
            <person name="Joshu C."/>
            <person name="Antonoiu B."/>
            <person name="Zidanic M."/>
            <person name="Strong C."/>
            <person name="Sun H."/>
            <person name="Lamar B."/>
            <person name="Yordan C."/>
            <person name="Ma P."/>
            <person name="Zhong J."/>
            <person name="Preston R."/>
            <person name="Vil D."/>
            <person name="Shekher M."/>
            <person name="Matero A."/>
            <person name="Shah R."/>
            <person name="Swaby I.K."/>
            <person name="O'Shaughnessy A."/>
            <person name="Rodriguez M."/>
            <person name="Hoffman J."/>
            <person name="Till S."/>
            <person name="Granat S."/>
            <person name="Shohdy N."/>
            <person name="Hasegawa A."/>
            <person name="Hameed A."/>
            <person name="Lodhi M."/>
            <person name="Johnson A."/>
            <person name="Chen E."/>
            <person name="Marra M.A."/>
            <person name="Martienssen R."/>
            <person name="McCombie W.R."/>
        </authorList>
    </citation>
    <scope>NUCLEOTIDE SEQUENCE [LARGE SCALE GENOMIC DNA]</scope>
    <source>
        <strain>cv. Columbia</strain>
    </source>
</reference>
<reference key="3">
    <citation type="journal article" date="2017" name="Plant J.">
        <title>Araport11: a complete reannotation of the Arabidopsis thaliana reference genome.</title>
        <authorList>
            <person name="Cheng C.Y."/>
            <person name="Krishnakumar V."/>
            <person name="Chan A.P."/>
            <person name="Thibaud-Nissen F."/>
            <person name="Schobel S."/>
            <person name="Town C.D."/>
        </authorList>
    </citation>
    <scope>GENOME REANNOTATION</scope>
    <source>
        <strain>cv. Columbia</strain>
    </source>
</reference>
<reference key="4">
    <citation type="journal article" date="1998" name="Plant J.">
        <title>Disease resistance gene homologs correlate with disease resistance loci of Arabidopsis thaliana.</title>
        <authorList>
            <person name="Speulman E."/>
            <person name="Bouchez D."/>
            <person name="Holub E.B."/>
            <person name="Beynon J.L."/>
        </authorList>
    </citation>
    <scope>NUCLEOTIDE SEQUENCE [GENOMIC DNA] OF 158-328</scope>
    <source>
        <strain>cv. Columbia</strain>
    </source>
</reference>
<reference key="5">
    <citation type="journal article" date="1998" name="Mol. Plant Microbe Interact.">
        <title>Identification of R-gene homologous DNA fragments genetically linked to disease resistance loci in Arabidopsis thaliana.</title>
        <authorList>
            <person name="Aarts M.G.M."/>
            <person name="te Lintel Hekkert B."/>
            <person name="Holub E.B."/>
            <person name="Beynon J.L."/>
            <person name="Stiekema W.J."/>
            <person name="Pereira A."/>
        </authorList>
    </citation>
    <scope>NUCLEOTIDE SEQUENCE [GENOMIC DNA] OF 165-322</scope>
    <source>
        <strain>cv. Columbia</strain>
    </source>
</reference>
<feature type="chain" id="PRO_0000212756" description="Probable disease resistance protein At4g14610">
    <location>
        <begin position="1"/>
        <end position="719"/>
    </location>
</feature>
<feature type="domain" description="NB-ARC">
    <location>
        <begin position="114"/>
        <end position="418"/>
    </location>
</feature>
<feature type="repeat" description="LRR 1">
    <location>
        <begin position="400"/>
        <end position="421"/>
    </location>
</feature>
<feature type="repeat" description="LRR 2">
    <location>
        <begin position="422"/>
        <end position="444"/>
    </location>
</feature>
<feature type="repeat" description="LRR 3">
    <location>
        <begin position="447"/>
        <end position="469"/>
    </location>
</feature>
<feature type="coiled-coil region" evidence="2">
    <location>
        <begin position="25"/>
        <end position="73"/>
    </location>
</feature>
<feature type="binding site" evidence="2">
    <location>
        <begin position="156"/>
        <end position="163"/>
    </location>
    <ligand>
        <name>ATP</name>
        <dbReference type="ChEBI" id="CHEBI:30616"/>
    </ligand>
</feature>
<feature type="sequence conflict" description="In Ref. 4; AAC50029." evidence="3" ref="4">
    <original>K</original>
    <variation>R</variation>
    <location>
        <position position="172"/>
    </location>
</feature>
<feature type="sequence conflict" description="In Ref. 4; AAC50029." evidence="3" ref="4">
    <original>D</original>
    <variation>G</variation>
    <location>
        <position position="239"/>
    </location>
</feature>
<feature type="sequence conflict" description="In Ref. 4; AAC50029." evidence="3" ref="4">
    <original>W</original>
    <variation>C</variation>
    <location>
        <position position="241"/>
    </location>
</feature>
<feature type="sequence conflict" description="In Ref. 5; AAC14554." evidence="3" ref="5">
    <original>V</original>
    <variation>G</variation>
    <location>
        <position position="271"/>
    </location>
</feature>
<keyword id="KW-0067">ATP-binding</keyword>
<keyword id="KW-0175">Coiled coil</keyword>
<keyword id="KW-0433">Leucine-rich repeat</keyword>
<keyword id="KW-0547">Nucleotide-binding</keyword>
<keyword id="KW-0611">Plant defense</keyword>
<keyword id="KW-1185">Reference proteome</keyword>
<keyword id="KW-0677">Repeat</keyword>
<dbReference type="EMBL" id="Z97336">
    <property type="protein sequence ID" value="CAB10240.1"/>
    <property type="molecule type" value="Genomic_DNA"/>
</dbReference>
<dbReference type="EMBL" id="AL161539">
    <property type="protein sequence ID" value="CAB78503.1"/>
    <property type="molecule type" value="Genomic_DNA"/>
</dbReference>
<dbReference type="EMBL" id="CP002687">
    <property type="status" value="NOT_ANNOTATED_CDS"/>
    <property type="molecule type" value="Genomic_DNA"/>
</dbReference>
<dbReference type="EMBL" id="U97222">
    <property type="protein sequence ID" value="AAC50029.1"/>
    <property type="molecule type" value="Genomic_DNA"/>
</dbReference>
<dbReference type="EMBL" id="AF039378">
    <property type="protein sequence ID" value="AAC14554.1"/>
    <property type="molecule type" value="Genomic_DNA"/>
</dbReference>
<dbReference type="PIR" id="F71408">
    <property type="entry name" value="F71408"/>
</dbReference>
<dbReference type="SMR" id="O23317"/>
<dbReference type="IntAct" id="O23317">
    <property type="interactions" value="1"/>
</dbReference>
<dbReference type="STRING" id="3702.O23317"/>
<dbReference type="PeptideAtlas" id="O23317"/>
<dbReference type="Araport" id="AT4G14610"/>
<dbReference type="TAIR" id="AT4G14610"/>
<dbReference type="InParanoid" id="O23317"/>
<dbReference type="PRO" id="PR:O23317"/>
<dbReference type="Proteomes" id="UP000006548">
    <property type="component" value="Chromosome 4"/>
</dbReference>
<dbReference type="ExpressionAtlas" id="O23317">
    <property type="expression patterns" value="baseline and differential"/>
</dbReference>
<dbReference type="GO" id="GO:0043531">
    <property type="term" value="F:ADP binding"/>
    <property type="evidence" value="ECO:0007669"/>
    <property type="project" value="InterPro"/>
</dbReference>
<dbReference type="GO" id="GO:0005524">
    <property type="term" value="F:ATP binding"/>
    <property type="evidence" value="ECO:0007669"/>
    <property type="project" value="UniProtKB-KW"/>
</dbReference>
<dbReference type="GO" id="GO:0098542">
    <property type="term" value="P:defense response to other organism"/>
    <property type="evidence" value="ECO:0000318"/>
    <property type="project" value="GO_Central"/>
</dbReference>
<dbReference type="FunFam" id="3.40.50.300:FF:001091">
    <property type="entry name" value="Probable disease resistance protein At1g61300"/>
    <property type="match status" value="1"/>
</dbReference>
<dbReference type="FunFam" id="1.10.8.430:FF:000003">
    <property type="entry name" value="Probable disease resistance protein At5g66910"/>
    <property type="match status" value="1"/>
</dbReference>
<dbReference type="Gene3D" id="1.10.8.430">
    <property type="entry name" value="Helical domain of apoptotic protease-activating factors"/>
    <property type="match status" value="1"/>
</dbReference>
<dbReference type="Gene3D" id="3.40.50.300">
    <property type="entry name" value="P-loop containing nucleotide triphosphate hydrolases"/>
    <property type="match status" value="1"/>
</dbReference>
<dbReference type="Gene3D" id="3.80.10.10">
    <property type="entry name" value="Ribonuclease Inhibitor"/>
    <property type="match status" value="1"/>
</dbReference>
<dbReference type="InterPro" id="IPR042197">
    <property type="entry name" value="Apaf_helical"/>
</dbReference>
<dbReference type="InterPro" id="IPR032675">
    <property type="entry name" value="LRR_dom_sf"/>
</dbReference>
<dbReference type="InterPro" id="IPR002182">
    <property type="entry name" value="NB-ARC"/>
</dbReference>
<dbReference type="InterPro" id="IPR027417">
    <property type="entry name" value="P-loop_NTPase"/>
</dbReference>
<dbReference type="InterPro" id="IPR050905">
    <property type="entry name" value="Plant_NBS-LRR"/>
</dbReference>
<dbReference type="PANTHER" id="PTHR33463:SF220">
    <property type="entry name" value="NB-ARC DOMAIN-CONTAINING PROTEIN"/>
    <property type="match status" value="1"/>
</dbReference>
<dbReference type="PANTHER" id="PTHR33463">
    <property type="entry name" value="NB-ARC DOMAIN-CONTAINING PROTEIN-RELATED"/>
    <property type="match status" value="1"/>
</dbReference>
<dbReference type="Pfam" id="PF23247">
    <property type="entry name" value="LRR_RPS2"/>
    <property type="match status" value="1"/>
</dbReference>
<dbReference type="Pfam" id="PF00931">
    <property type="entry name" value="NB-ARC"/>
    <property type="match status" value="1"/>
</dbReference>
<dbReference type="PRINTS" id="PR00364">
    <property type="entry name" value="DISEASERSIST"/>
</dbReference>
<dbReference type="SUPFAM" id="SSF52058">
    <property type="entry name" value="L domain-like"/>
    <property type="match status" value="1"/>
</dbReference>
<dbReference type="SUPFAM" id="SSF52540">
    <property type="entry name" value="P-loop containing nucleoside triphosphate hydrolases"/>
    <property type="match status" value="1"/>
</dbReference>
<sequence>MALTKLRFVNQFSQWLCVRKGYIHSLPENLAALQKAIEVLKTKHDDVKRRVDKEEFLGRRHRLSQVQVEIERLCFCGFCSKSFGKSYHYGKMVSVMLKEVENLSSRGVFDVVTEENLVAQVEEMPIQSTVVGQETMLERVWNTLMKDGFKIMGLYGMGGVGKTTLLTQINKKFSETDGGFDIVMWVVVSKTSEIYRIQEDIAKRLGLTGEEWDKKNENKRAVDIHNVLRRHKFVLLLDDIWEKVNLELVGVPYPSRENGSIVAFTTRSRDVCGRMGVDDPMQVSCLEPEDAWDLFQNKVGENTLKSHPDIPELAKQVAEKCRGLPLALNVIGETMACKSTVQEWRHAIDEEWKKTEVKMHDVVREMALWISSDLGKHKDQCIVRAGVGLHAVPEVKNWRAVRRMSLMKNELEKILGCPTCPQLTTLLLQKNHKLVNISGEFFRFMPNLVVLDLSWNSSLTGLPKKISEVETTNTSEFGVHEEFGEYAGVSKLLSLKTLRLQKSKKALDVNSAKELQLLEHIEVLTIDIFSKVEEESFKILTFPSMCNIRRIGIWKCGMKEIKVEMRTSSCFSSLSKVVIGQCDGLKELTWLLFAPNLTYLDARFAEQLEDIISEEKAASVTDENASIIIPFQKLECLSLSDLPKLKSIYWSPLSFPRLSELAVQEHCPKLKKLPLNSKSGTAGVELVVKYGENKWLEGVEWEDKATELRFLATCKSLYR</sequence>